<comment type="function">
    <text evidence="1">Allows the formation of correctly charged Asn-tRNA(Asn) or Gln-tRNA(Gln) through the transamidation of misacylated Asp-tRNA(Asn) or Glu-tRNA(Gln) in organisms which lack either or both of asparaginyl-tRNA or glutaminyl-tRNA synthetases. The reaction takes place in the presence of glutamine and ATP through an activated phospho-Asp-tRNA(Asn) or phospho-Glu-tRNA(Gln).</text>
</comment>
<comment type="catalytic activity">
    <reaction evidence="1">
        <text>L-glutamyl-tRNA(Gln) + L-glutamine + ATP + H2O = L-glutaminyl-tRNA(Gln) + L-glutamate + ADP + phosphate + H(+)</text>
        <dbReference type="Rhea" id="RHEA:17521"/>
        <dbReference type="Rhea" id="RHEA-COMP:9681"/>
        <dbReference type="Rhea" id="RHEA-COMP:9684"/>
        <dbReference type="ChEBI" id="CHEBI:15377"/>
        <dbReference type="ChEBI" id="CHEBI:15378"/>
        <dbReference type="ChEBI" id="CHEBI:29985"/>
        <dbReference type="ChEBI" id="CHEBI:30616"/>
        <dbReference type="ChEBI" id="CHEBI:43474"/>
        <dbReference type="ChEBI" id="CHEBI:58359"/>
        <dbReference type="ChEBI" id="CHEBI:78520"/>
        <dbReference type="ChEBI" id="CHEBI:78521"/>
        <dbReference type="ChEBI" id="CHEBI:456216"/>
    </reaction>
</comment>
<comment type="catalytic activity">
    <reaction evidence="1">
        <text>L-aspartyl-tRNA(Asn) + L-glutamine + ATP + H2O = L-asparaginyl-tRNA(Asn) + L-glutamate + ADP + phosphate + 2 H(+)</text>
        <dbReference type="Rhea" id="RHEA:14513"/>
        <dbReference type="Rhea" id="RHEA-COMP:9674"/>
        <dbReference type="Rhea" id="RHEA-COMP:9677"/>
        <dbReference type="ChEBI" id="CHEBI:15377"/>
        <dbReference type="ChEBI" id="CHEBI:15378"/>
        <dbReference type="ChEBI" id="CHEBI:29985"/>
        <dbReference type="ChEBI" id="CHEBI:30616"/>
        <dbReference type="ChEBI" id="CHEBI:43474"/>
        <dbReference type="ChEBI" id="CHEBI:58359"/>
        <dbReference type="ChEBI" id="CHEBI:78515"/>
        <dbReference type="ChEBI" id="CHEBI:78516"/>
        <dbReference type="ChEBI" id="CHEBI:456216"/>
    </reaction>
</comment>
<comment type="subunit">
    <text evidence="1">Heterotrimer of A, B and C subunits.</text>
</comment>
<comment type="similarity">
    <text evidence="1">Belongs to the GatC family.</text>
</comment>
<sequence length="95" mass="10479">MSLSLDDVKRVANLARIEISEDEARKALIQLSGIFGLIEQMQAVDVSAITPMSHAQDVMQRLRADGATEIDQRELFQSVAPQVEAGLYLVPKVIE</sequence>
<name>GATC_NITMU</name>
<protein>
    <recommendedName>
        <fullName evidence="1">Aspartyl/glutamyl-tRNA(Asn/Gln) amidotransferase subunit C</fullName>
        <shortName evidence="1">Asp/Glu-ADT subunit C</shortName>
        <ecNumber evidence="1">6.3.5.-</ecNumber>
    </recommendedName>
</protein>
<organism>
    <name type="scientific">Nitrosospira multiformis (strain ATCC 25196 / NCIMB 11849 / C 71)</name>
    <dbReference type="NCBI Taxonomy" id="323848"/>
    <lineage>
        <taxon>Bacteria</taxon>
        <taxon>Pseudomonadati</taxon>
        <taxon>Pseudomonadota</taxon>
        <taxon>Betaproteobacteria</taxon>
        <taxon>Nitrosomonadales</taxon>
        <taxon>Nitrosomonadaceae</taxon>
        <taxon>Nitrosospira</taxon>
    </lineage>
</organism>
<feature type="chain" id="PRO_1000016158" description="Aspartyl/glutamyl-tRNA(Asn/Gln) amidotransferase subunit C">
    <location>
        <begin position="1"/>
        <end position="95"/>
    </location>
</feature>
<accession>Q2YC92</accession>
<reference key="1">
    <citation type="submission" date="2005-08" db="EMBL/GenBank/DDBJ databases">
        <title>Complete sequence of chromosome 1 of Nitrosospira multiformis ATCC 25196.</title>
        <authorList>
            <person name="Copeland A."/>
            <person name="Lucas S."/>
            <person name="Lapidus A."/>
            <person name="Barry K."/>
            <person name="Detter J.C."/>
            <person name="Glavina T."/>
            <person name="Hammon N."/>
            <person name="Israni S."/>
            <person name="Pitluck S."/>
            <person name="Chain P."/>
            <person name="Malfatti S."/>
            <person name="Shin M."/>
            <person name="Vergez L."/>
            <person name="Schmutz J."/>
            <person name="Larimer F."/>
            <person name="Land M."/>
            <person name="Hauser L."/>
            <person name="Kyrpides N."/>
            <person name="Lykidis A."/>
            <person name="Richardson P."/>
        </authorList>
    </citation>
    <scope>NUCLEOTIDE SEQUENCE [LARGE SCALE GENOMIC DNA]</scope>
    <source>
        <strain>ATCC 25196 / NCIMB 11849 / C 71</strain>
    </source>
</reference>
<proteinExistence type="inferred from homology"/>
<gene>
    <name evidence="1" type="primary">gatC</name>
    <name type="ordered locus">Nmul_A0321</name>
</gene>
<evidence type="ECO:0000255" key="1">
    <source>
        <dbReference type="HAMAP-Rule" id="MF_00122"/>
    </source>
</evidence>
<dbReference type="EC" id="6.3.5.-" evidence="1"/>
<dbReference type="EMBL" id="CP000103">
    <property type="protein sequence ID" value="ABB73629.1"/>
    <property type="molecule type" value="Genomic_DNA"/>
</dbReference>
<dbReference type="RefSeq" id="WP_011379683.1">
    <property type="nucleotide sequence ID" value="NC_007614.1"/>
</dbReference>
<dbReference type="SMR" id="Q2YC92"/>
<dbReference type="STRING" id="323848.Nmul_A0321"/>
<dbReference type="KEGG" id="nmu:Nmul_A0321"/>
<dbReference type="eggNOG" id="COG0721">
    <property type="taxonomic scope" value="Bacteria"/>
</dbReference>
<dbReference type="HOGENOM" id="CLU_105899_2_2_4"/>
<dbReference type="OrthoDB" id="9794326at2"/>
<dbReference type="Proteomes" id="UP000002718">
    <property type="component" value="Chromosome"/>
</dbReference>
<dbReference type="GO" id="GO:0050566">
    <property type="term" value="F:asparaginyl-tRNA synthase (glutamine-hydrolyzing) activity"/>
    <property type="evidence" value="ECO:0007669"/>
    <property type="project" value="RHEA"/>
</dbReference>
<dbReference type="GO" id="GO:0005524">
    <property type="term" value="F:ATP binding"/>
    <property type="evidence" value="ECO:0007669"/>
    <property type="project" value="UniProtKB-KW"/>
</dbReference>
<dbReference type="GO" id="GO:0050567">
    <property type="term" value="F:glutaminyl-tRNA synthase (glutamine-hydrolyzing) activity"/>
    <property type="evidence" value="ECO:0007669"/>
    <property type="project" value="UniProtKB-UniRule"/>
</dbReference>
<dbReference type="GO" id="GO:0070681">
    <property type="term" value="P:glutaminyl-tRNAGln biosynthesis via transamidation"/>
    <property type="evidence" value="ECO:0007669"/>
    <property type="project" value="TreeGrafter"/>
</dbReference>
<dbReference type="GO" id="GO:0006450">
    <property type="term" value="P:regulation of translational fidelity"/>
    <property type="evidence" value="ECO:0007669"/>
    <property type="project" value="InterPro"/>
</dbReference>
<dbReference type="GO" id="GO:0006412">
    <property type="term" value="P:translation"/>
    <property type="evidence" value="ECO:0007669"/>
    <property type="project" value="UniProtKB-UniRule"/>
</dbReference>
<dbReference type="Gene3D" id="1.10.20.60">
    <property type="entry name" value="Glu-tRNAGln amidotransferase C subunit, N-terminal domain"/>
    <property type="match status" value="1"/>
</dbReference>
<dbReference type="HAMAP" id="MF_00122">
    <property type="entry name" value="GatC"/>
    <property type="match status" value="1"/>
</dbReference>
<dbReference type="InterPro" id="IPR036113">
    <property type="entry name" value="Asp/Glu-ADT_sf_sub_c"/>
</dbReference>
<dbReference type="InterPro" id="IPR003837">
    <property type="entry name" value="GatC"/>
</dbReference>
<dbReference type="NCBIfam" id="TIGR00135">
    <property type="entry name" value="gatC"/>
    <property type="match status" value="1"/>
</dbReference>
<dbReference type="PANTHER" id="PTHR15004">
    <property type="entry name" value="GLUTAMYL-TRNA(GLN) AMIDOTRANSFERASE SUBUNIT C, MITOCHONDRIAL"/>
    <property type="match status" value="1"/>
</dbReference>
<dbReference type="PANTHER" id="PTHR15004:SF0">
    <property type="entry name" value="GLUTAMYL-TRNA(GLN) AMIDOTRANSFERASE SUBUNIT C, MITOCHONDRIAL"/>
    <property type="match status" value="1"/>
</dbReference>
<dbReference type="Pfam" id="PF02686">
    <property type="entry name" value="GatC"/>
    <property type="match status" value="1"/>
</dbReference>
<dbReference type="SUPFAM" id="SSF141000">
    <property type="entry name" value="Glu-tRNAGln amidotransferase C subunit"/>
    <property type="match status" value="1"/>
</dbReference>
<keyword id="KW-0067">ATP-binding</keyword>
<keyword id="KW-0436">Ligase</keyword>
<keyword id="KW-0547">Nucleotide-binding</keyword>
<keyword id="KW-0648">Protein biosynthesis</keyword>
<keyword id="KW-1185">Reference proteome</keyword>